<protein>
    <recommendedName>
        <fullName>UPF0337 protein SAV1625</fullName>
    </recommendedName>
</protein>
<organism>
    <name type="scientific">Staphylococcus aureus (strain Mu50 / ATCC 700699)</name>
    <dbReference type="NCBI Taxonomy" id="158878"/>
    <lineage>
        <taxon>Bacteria</taxon>
        <taxon>Bacillati</taxon>
        <taxon>Bacillota</taxon>
        <taxon>Bacilli</taxon>
        <taxon>Bacillales</taxon>
        <taxon>Staphylococcaceae</taxon>
        <taxon>Staphylococcus</taxon>
    </lineage>
</organism>
<evidence type="ECO:0000256" key="1">
    <source>
        <dbReference type="SAM" id="MobiDB-lite"/>
    </source>
</evidence>
<evidence type="ECO:0000305" key="2"/>
<sequence>MADESKFDQFKGNVKETVGNVTDNKELEKEGQQDKATGKAKEVVENAKNKITDAIDKLKK</sequence>
<gene>
    <name type="ordered locus">SAV1625</name>
</gene>
<dbReference type="EMBL" id="BA000017">
    <property type="protein sequence ID" value="BAB57787.1"/>
    <property type="molecule type" value="Genomic_DNA"/>
</dbReference>
<dbReference type="RefSeq" id="WP_000752909.1">
    <property type="nucleotide sequence ID" value="NC_002758.2"/>
</dbReference>
<dbReference type="SMR" id="Q99TM4"/>
<dbReference type="KEGG" id="sav:SAV1625"/>
<dbReference type="HOGENOM" id="CLU_135567_0_3_9"/>
<dbReference type="PhylomeDB" id="Q99TM4"/>
<dbReference type="Proteomes" id="UP000002481">
    <property type="component" value="Chromosome"/>
</dbReference>
<dbReference type="Gene3D" id="1.10.1470.10">
    <property type="entry name" value="YjbJ"/>
    <property type="match status" value="1"/>
</dbReference>
<dbReference type="InterPro" id="IPR008462">
    <property type="entry name" value="CsbD"/>
</dbReference>
<dbReference type="InterPro" id="IPR050423">
    <property type="entry name" value="UPF0337_stress_rsp"/>
</dbReference>
<dbReference type="InterPro" id="IPR036629">
    <property type="entry name" value="YjbJ_sf"/>
</dbReference>
<dbReference type="PANTHER" id="PTHR34977">
    <property type="entry name" value="UPF0337 PROTEIN YJBJ"/>
    <property type="match status" value="1"/>
</dbReference>
<dbReference type="PANTHER" id="PTHR34977:SF1">
    <property type="entry name" value="UPF0337 PROTEIN YJBJ"/>
    <property type="match status" value="1"/>
</dbReference>
<dbReference type="Pfam" id="PF05532">
    <property type="entry name" value="CsbD"/>
    <property type="match status" value="1"/>
</dbReference>
<dbReference type="SUPFAM" id="SSF69047">
    <property type="entry name" value="Hypothetical protein YjbJ"/>
    <property type="match status" value="1"/>
</dbReference>
<accession>Q99TM4</accession>
<proteinExistence type="inferred from homology"/>
<comment type="similarity">
    <text evidence="2">Belongs to the UPF0337 (CsbD) family.</text>
</comment>
<name>Y1625_STAAM</name>
<reference key="1">
    <citation type="journal article" date="2001" name="Lancet">
        <title>Whole genome sequencing of meticillin-resistant Staphylococcus aureus.</title>
        <authorList>
            <person name="Kuroda M."/>
            <person name="Ohta T."/>
            <person name="Uchiyama I."/>
            <person name="Baba T."/>
            <person name="Yuzawa H."/>
            <person name="Kobayashi I."/>
            <person name="Cui L."/>
            <person name="Oguchi A."/>
            <person name="Aoki K."/>
            <person name="Nagai Y."/>
            <person name="Lian J.-Q."/>
            <person name="Ito T."/>
            <person name="Kanamori M."/>
            <person name="Matsumaru H."/>
            <person name="Maruyama A."/>
            <person name="Murakami H."/>
            <person name="Hosoyama A."/>
            <person name="Mizutani-Ui Y."/>
            <person name="Takahashi N.K."/>
            <person name="Sawano T."/>
            <person name="Inoue R."/>
            <person name="Kaito C."/>
            <person name="Sekimizu K."/>
            <person name="Hirakawa H."/>
            <person name="Kuhara S."/>
            <person name="Goto S."/>
            <person name="Yabuzaki J."/>
            <person name="Kanehisa M."/>
            <person name="Yamashita A."/>
            <person name="Oshima K."/>
            <person name="Furuya K."/>
            <person name="Yoshino C."/>
            <person name="Shiba T."/>
            <person name="Hattori M."/>
            <person name="Ogasawara N."/>
            <person name="Hayashi H."/>
            <person name="Hiramatsu K."/>
        </authorList>
    </citation>
    <scope>NUCLEOTIDE SEQUENCE [LARGE SCALE GENOMIC DNA]</scope>
    <source>
        <strain>Mu50 / ATCC 700699</strain>
    </source>
</reference>
<feature type="chain" id="PRO_0000210033" description="UPF0337 protein SAV1625">
    <location>
        <begin position="1"/>
        <end position="60"/>
    </location>
</feature>
<feature type="region of interest" description="Disordered" evidence="1">
    <location>
        <begin position="18"/>
        <end position="41"/>
    </location>
</feature>
<feature type="compositionally biased region" description="Basic and acidic residues" evidence="1">
    <location>
        <begin position="23"/>
        <end position="41"/>
    </location>
</feature>